<organism>
    <name type="scientific">Schizosaccharomyces pombe (strain 972 / ATCC 24843)</name>
    <name type="common">Fission yeast</name>
    <dbReference type="NCBI Taxonomy" id="284812"/>
    <lineage>
        <taxon>Eukaryota</taxon>
        <taxon>Fungi</taxon>
        <taxon>Dikarya</taxon>
        <taxon>Ascomycota</taxon>
        <taxon>Taphrinomycotina</taxon>
        <taxon>Schizosaccharomycetes</taxon>
        <taxon>Schizosaccharomycetales</taxon>
        <taxon>Schizosaccharomycetaceae</taxon>
        <taxon>Schizosaccharomyces</taxon>
    </lineage>
</organism>
<reference key="1">
    <citation type="journal article" date="2002" name="Nature">
        <title>The genome sequence of Schizosaccharomyces pombe.</title>
        <authorList>
            <person name="Wood V."/>
            <person name="Gwilliam R."/>
            <person name="Rajandream M.A."/>
            <person name="Lyne M.H."/>
            <person name="Lyne R."/>
            <person name="Stewart A."/>
            <person name="Sgouros J.G."/>
            <person name="Peat N."/>
            <person name="Hayles J."/>
            <person name="Baker S.G."/>
            <person name="Basham D."/>
            <person name="Bowman S."/>
            <person name="Brooks K."/>
            <person name="Brown D."/>
            <person name="Brown S."/>
            <person name="Chillingworth T."/>
            <person name="Churcher C.M."/>
            <person name="Collins M."/>
            <person name="Connor R."/>
            <person name="Cronin A."/>
            <person name="Davis P."/>
            <person name="Feltwell T."/>
            <person name="Fraser A."/>
            <person name="Gentles S."/>
            <person name="Goble A."/>
            <person name="Hamlin N."/>
            <person name="Harris D.E."/>
            <person name="Hidalgo J."/>
            <person name="Hodgson G."/>
            <person name="Holroyd S."/>
            <person name="Hornsby T."/>
            <person name="Howarth S."/>
            <person name="Huckle E.J."/>
            <person name="Hunt S."/>
            <person name="Jagels K."/>
            <person name="James K.D."/>
            <person name="Jones L."/>
            <person name="Jones M."/>
            <person name="Leather S."/>
            <person name="McDonald S."/>
            <person name="McLean J."/>
            <person name="Mooney P."/>
            <person name="Moule S."/>
            <person name="Mungall K.L."/>
            <person name="Murphy L.D."/>
            <person name="Niblett D."/>
            <person name="Odell C."/>
            <person name="Oliver K."/>
            <person name="O'Neil S."/>
            <person name="Pearson D."/>
            <person name="Quail M.A."/>
            <person name="Rabbinowitsch E."/>
            <person name="Rutherford K.M."/>
            <person name="Rutter S."/>
            <person name="Saunders D."/>
            <person name="Seeger K."/>
            <person name="Sharp S."/>
            <person name="Skelton J."/>
            <person name="Simmonds M.N."/>
            <person name="Squares R."/>
            <person name="Squares S."/>
            <person name="Stevens K."/>
            <person name="Taylor K."/>
            <person name="Taylor R.G."/>
            <person name="Tivey A."/>
            <person name="Walsh S.V."/>
            <person name="Warren T."/>
            <person name="Whitehead S."/>
            <person name="Woodward J.R."/>
            <person name="Volckaert G."/>
            <person name="Aert R."/>
            <person name="Robben J."/>
            <person name="Grymonprez B."/>
            <person name="Weltjens I."/>
            <person name="Vanstreels E."/>
            <person name="Rieger M."/>
            <person name="Schaefer M."/>
            <person name="Mueller-Auer S."/>
            <person name="Gabel C."/>
            <person name="Fuchs M."/>
            <person name="Duesterhoeft A."/>
            <person name="Fritzc C."/>
            <person name="Holzer E."/>
            <person name="Moestl D."/>
            <person name="Hilbert H."/>
            <person name="Borzym K."/>
            <person name="Langer I."/>
            <person name="Beck A."/>
            <person name="Lehrach H."/>
            <person name="Reinhardt R."/>
            <person name="Pohl T.M."/>
            <person name="Eger P."/>
            <person name="Zimmermann W."/>
            <person name="Wedler H."/>
            <person name="Wambutt R."/>
            <person name="Purnelle B."/>
            <person name="Goffeau A."/>
            <person name="Cadieu E."/>
            <person name="Dreano S."/>
            <person name="Gloux S."/>
            <person name="Lelaure V."/>
            <person name="Mottier S."/>
            <person name="Galibert F."/>
            <person name="Aves S.J."/>
            <person name="Xiang Z."/>
            <person name="Hunt C."/>
            <person name="Moore K."/>
            <person name="Hurst S.M."/>
            <person name="Lucas M."/>
            <person name="Rochet M."/>
            <person name="Gaillardin C."/>
            <person name="Tallada V.A."/>
            <person name="Garzon A."/>
            <person name="Thode G."/>
            <person name="Daga R.R."/>
            <person name="Cruzado L."/>
            <person name="Jimenez J."/>
            <person name="Sanchez M."/>
            <person name="del Rey F."/>
            <person name="Benito J."/>
            <person name="Dominguez A."/>
            <person name="Revuelta J.L."/>
            <person name="Moreno S."/>
            <person name="Armstrong J."/>
            <person name="Forsburg S.L."/>
            <person name="Cerutti L."/>
            <person name="Lowe T."/>
            <person name="McCombie W.R."/>
            <person name="Paulsen I."/>
            <person name="Potashkin J."/>
            <person name="Shpakovski G.V."/>
            <person name="Ussery D."/>
            <person name="Barrell B.G."/>
            <person name="Nurse P."/>
        </authorList>
    </citation>
    <scope>NUCLEOTIDE SEQUENCE [LARGE SCALE GENOMIC DNA]</scope>
    <source>
        <strain>972 / ATCC 24843</strain>
    </source>
</reference>
<reference key="2">
    <citation type="journal article" date="2006" name="Nat. Biotechnol.">
        <title>ORFeome cloning and global analysis of protein localization in the fission yeast Schizosaccharomyces pombe.</title>
        <authorList>
            <person name="Matsuyama A."/>
            <person name="Arai R."/>
            <person name="Yashiroda Y."/>
            <person name="Shirai A."/>
            <person name="Kamata A."/>
            <person name="Sekido S."/>
            <person name="Kobayashi Y."/>
            <person name="Hashimoto A."/>
            <person name="Hamamoto M."/>
            <person name="Hiraoka Y."/>
            <person name="Horinouchi S."/>
            <person name="Yoshida M."/>
        </authorList>
    </citation>
    <scope>SUBCELLULAR LOCATION [LARGE SCALE ANALYSIS]</scope>
</reference>
<accession>Q9P7X9</accession>
<feature type="chain" id="PRO_0000310796" description="Uncharacterized mitochondrial carrier P23A10.06">
    <location>
        <begin position="1"/>
        <end position="335"/>
    </location>
</feature>
<feature type="transmembrane region" description="Helical; Name=1" evidence="1">
    <location>
        <begin position="28"/>
        <end position="48"/>
    </location>
</feature>
<feature type="transmembrane region" description="Helical; Name=2" evidence="1">
    <location>
        <begin position="104"/>
        <end position="123"/>
    </location>
</feature>
<feature type="transmembrane region" description="Helical; Name=3" evidence="1">
    <location>
        <begin position="133"/>
        <end position="154"/>
    </location>
</feature>
<feature type="transmembrane region" description="Helical; Name=4" evidence="1">
    <location>
        <begin position="195"/>
        <end position="219"/>
    </location>
</feature>
<feature type="transmembrane region" description="Helical; Name=5" evidence="1">
    <location>
        <begin position="246"/>
        <end position="263"/>
    </location>
</feature>
<feature type="transmembrane region" description="Helical; Name=6" evidence="1">
    <location>
        <begin position="307"/>
        <end position="323"/>
    </location>
</feature>
<feature type="repeat" description="Solcar 1">
    <location>
        <begin position="22"/>
        <end position="129"/>
    </location>
</feature>
<feature type="repeat" description="Solcar 2">
    <location>
        <begin position="134"/>
        <end position="227"/>
    </location>
</feature>
<feature type="repeat" description="Solcar 3">
    <location>
        <begin position="244"/>
        <end position="327"/>
    </location>
</feature>
<dbReference type="EMBL" id="CU329671">
    <property type="protein sequence ID" value="CAB66434.1"/>
    <property type="molecule type" value="Genomic_DNA"/>
</dbReference>
<dbReference type="PIR" id="T50393">
    <property type="entry name" value="T50393"/>
</dbReference>
<dbReference type="SMR" id="Q9P7X9"/>
<dbReference type="FunCoup" id="Q9P7X9">
    <property type="interactions" value="437"/>
</dbReference>
<dbReference type="STRING" id="284812.Q9P7X9"/>
<dbReference type="PaxDb" id="4896-SPBP23A10.06.1"/>
<dbReference type="EnsemblFungi" id="SPBP23A10.06.1">
    <property type="protein sequence ID" value="SPBP23A10.06.1:pep"/>
    <property type="gene ID" value="SPBP23A10.06"/>
</dbReference>
<dbReference type="KEGG" id="spo:2541312"/>
<dbReference type="PomBase" id="SPBP23A10.06"/>
<dbReference type="VEuPathDB" id="FungiDB:SPBP23A10.06"/>
<dbReference type="eggNOG" id="KOG0761">
    <property type="taxonomic scope" value="Eukaryota"/>
</dbReference>
<dbReference type="HOGENOM" id="CLU_015166_0_0_1"/>
<dbReference type="InParanoid" id="Q9P7X9"/>
<dbReference type="OMA" id="YWWGYES"/>
<dbReference type="PhylomeDB" id="Q9P7X9"/>
<dbReference type="PRO" id="PR:Q9P7X9"/>
<dbReference type="Proteomes" id="UP000002485">
    <property type="component" value="Chromosome II"/>
</dbReference>
<dbReference type="GO" id="GO:0005743">
    <property type="term" value="C:mitochondrial inner membrane"/>
    <property type="evidence" value="ECO:0000303"/>
    <property type="project" value="PomBase"/>
</dbReference>
<dbReference type="GO" id="GO:0005739">
    <property type="term" value="C:mitochondrion"/>
    <property type="evidence" value="ECO:0007005"/>
    <property type="project" value="PomBase"/>
</dbReference>
<dbReference type="GO" id="GO:0034634">
    <property type="term" value="F:glutathione transmembrane transporter activity"/>
    <property type="evidence" value="ECO:0000266"/>
    <property type="project" value="PomBase"/>
</dbReference>
<dbReference type="GO" id="GO:0160007">
    <property type="term" value="P:glutathione import into mitochondrion"/>
    <property type="evidence" value="ECO:0000266"/>
    <property type="project" value="PomBase"/>
</dbReference>
<dbReference type="GO" id="GO:0170036">
    <property type="term" value="P:import into the mitochondrion"/>
    <property type="evidence" value="ECO:0000318"/>
    <property type="project" value="GO_Central"/>
</dbReference>
<dbReference type="Gene3D" id="1.50.40.10">
    <property type="entry name" value="Mitochondrial carrier domain"/>
    <property type="match status" value="1"/>
</dbReference>
<dbReference type="InterPro" id="IPR018108">
    <property type="entry name" value="Mitochondrial_sb/sol_carrier"/>
</dbReference>
<dbReference type="InterPro" id="IPR023395">
    <property type="entry name" value="Mt_carrier_dom_sf"/>
</dbReference>
<dbReference type="InterPro" id="IPR045315">
    <property type="entry name" value="Mtm1-like"/>
</dbReference>
<dbReference type="PANTHER" id="PTHR45760">
    <property type="entry name" value="FI19922P1-RELATED"/>
    <property type="match status" value="1"/>
</dbReference>
<dbReference type="PANTHER" id="PTHR45760:SF2">
    <property type="entry name" value="FI19922P1-RELATED"/>
    <property type="match status" value="1"/>
</dbReference>
<dbReference type="Pfam" id="PF00153">
    <property type="entry name" value="Mito_carr"/>
    <property type="match status" value="3"/>
</dbReference>
<dbReference type="SUPFAM" id="SSF103506">
    <property type="entry name" value="Mitochondrial carrier"/>
    <property type="match status" value="1"/>
</dbReference>
<dbReference type="PROSITE" id="PS50920">
    <property type="entry name" value="SOLCAR"/>
    <property type="match status" value="3"/>
</dbReference>
<keyword id="KW-0472">Membrane</keyword>
<keyword id="KW-0496">Mitochondrion</keyword>
<keyword id="KW-0999">Mitochondrion inner membrane</keyword>
<keyword id="KW-1185">Reference proteome</keyword>
<keyword id="KW-0677">Repeat</keyword>
<keyword id="KW-0812">Transmembrane</keyword>
<keyword id="KW-1133">Transmembrane helix</keyword>
<keyword id="KW-0813">Transport</keyword>
<comment type="subcellular location">
    <subcellularLocation>
        <location evidence="2">Mitochondrion inner membrane</location>
        <topology evidence="2">Multi-pass membrane protein</topology>
    </subcellularLocation>
</comment>
<comment type="similarity">
    <text evidence="3">Belongs to the mitochondrial carrier (TC 2.A.29) family.</text>
</comment>
<gene>
    <name type="ORF">SPBP23A10.06</name>
</gene>
<sequence length="335" mass="36404">MQIGAATEGVEADLSVNAEPDVKPIAKMLSACVGSVITTLTVTPLDVVKTRLQSESISQYSSTQPISSAKILGKGRPAPKPLGGPVSGLYQIARHEGVRSLWRGLVPSLTMLLPANTVQFLGYEQLLPLYSDWGFPAAAAIAGASARTISATIVSPIELFRTRVQAVGGHYPPGHAREIANEVFDGLKLMIHQKGILNLWSGVSVTLWRDVPFSAFYWWSYERIRLFLLGHPSLQAFSSSQSTKDLYINFVSGGISGTLATLLTQPFDVSKTAKQVHGHTLTRGQFMLTLWKRGGPKALWKGTLPRCVKVAPSCAIMISSYHLTKKYFSESVDAY</sequence>
<name>YH66_SCHPO</name>
<proteinExistence type="inferred from homology"/>
<protein>
    <recommendedName>
        <fullName>Uncharacterized mitochondrial carrier P23A10.06</fullName>
    </recommendedName>
</protein>
<evidence type="ECO:0000255" key="1"/>
<evidence type="ECO:0000269" key="2">
    <source>
    </source>
</evidence>
<evidence type="ECO:0000305" key="3"/>